<feature type="chain" id="PRO_0000333864" description="Transcription factor TFIIIB component B'' homolog">
    <location>
        <begin position="1"/>
        <end position="2467"/>
    </location>
</feature>
<feature type="domain" description="Myb-like">
    <location>
        <begin position="297"/>
        <end position="347"/>
    </location>
</feature>
<feature type="region of interest" description="Interaction with ZBTB43" evidence="1">
    <location>
        <begin position="1"/>
        <end position="301"/>
    </location>
</feature>
<feature type="region of interest" description="Disordered" evidence="3">
    <location>
        <begin position="1"/>
        <end position="145"/>
    </location>
</feature>
<feature type="region of interest" description="Disordered" evidence="3">
    <location>
        <begin position="159"/>
        <end position="243"/>
    </location>
</feature>
<feature type="region of interest" description="Required for phosphorylation by CSNK2A1" evidence="1">
    <location>
        <begin position="357"/>
        <end position="472"/>
    </location>
</feature>
<feature type="region of interest" description="Disordered" evidence="3">
    <location>
        <begin position="380"/>
        <end position="513"/>
    </location>
</feature>
<feature type="region of interest" description="Disordered" evidence="3">
    <location>
        <begin position="576"/>
        <end position="720"/>
    </location>
</feature>
<feature type="region of interest" description="Disordered" evidence="3">
    <location>
        <begin position="748"/>
        <end position="844"/>
    </location>
</feature>
<feature type="region of interest" description="Disordered" evidence="3">
    <location>
        <begin position="866"/>
        <end position="893"/>
    </location>
</feature>
<feature type="region of interest" description="Disordered" evidence="3">
    <location>
        <begin position="971"/>
        <end position="1200"/>
    </location>
</feature>
<feature type="region of interest" description="Disordered" evidence="3">
    <location>
        <begin position="1231"/>
        <end position="1270"/>
    </location>
</feature>
<feature type="region of interest" description="Disordered" evidence="3">
    <location>
        <begin position="1318"/>
        <end position="1388"/>
    </location>
</feature>
<feature type="region of interest" description="Disordered" evidence="3">
    <location>
        <begin position="1409"/>
        <end position="1448"/>
    </location>
</feature>
<feature type="region of interest" description="Disordered" evidence="3">
    <location>
        <begin position="1527"/>
        <end position="1561"/>
    </location>
</feature>
<feature type="region of interest" description="Disordered" evidence="3">
    <location>
        <begin position="1592"/>
        <end position="1706"/>
    </location>
</feature>
<feature type="region of interest" description="Disordered" evidence="3">
    <location>
        <begin position="1902"/>
        <end position="1926"/>
    </location>
</feature>
<feature type="region of interest" description="Disordered" evidence="3">
    <location>
        <begin position="1977"/>
        <end position="2014"/>
    </location>
</feature>
<feature type="region of interest" description="Disordered" evidence="3">
    <location>
        <begin position="2058"/>
        <end position="2083"/>
    </location>
</feature>
<feature type="region of interest" description="Disordered" evidence="3">
    <location>
        <begin position="2179"/>
        <end position="2206"/>
    </location>
</feature>
<feature type="region of interest" description="Disordered" evidence="3">
    <location>
        <begin position="2260"/>
        <end position="2290"/>
    </location>
</feature>
<feature type="region of interest" description="Disordered" evidence="3">
    <location>
        <begin position="2304"/>
        <end position="2449"/>
    </location>
</feature>
<feature type="coiled-coil region" evidence="2">
    <location>
        <begin position="144"/>
        <end position="177"/>
    </location>
</feature>
<feature type="coiled-coil region" evidence="2">
    <location>
        <begin position="458"/>
        <end position="487"/>
    </location>
</feature>
<feature type="compositionally biased region" description="Low complexity" evidence="3">
    <location>
        <begin position="81"/>
        <end position="92"/>
    </location>
</feature>
<feature type="compositionally biased region" description="Polar residues" evidence="3">
    <location>
        <begin position="99"/>
        <end position="118"/>
    </location>
</feature>
<feature type="compositionally biased region" description="Basic and acidic residues" evidence="3">
    <location>
        <begin position="133"/>
        <end position="144"/>
    </location>
</feature>
<feature type="compositionally biased region" description="Basic and acidic residues" evidence="3">
    <location>
        <begin position="177"/>
        <end position="186"/>
    </location>
</feature>
<feature type="compositionally biased region" description="Acidic residues" evidence="3">
    <location>
        <begin position="231"/>
        <end position="242"/>
    </location>
</feature>
<feature type="compositionally biased region" description="Basic and acidic residues" evidence="3">
    <location>
        <begin position="649"/>
        <end position="660"/>
    </location>
</feature>
<feature type="compositionally biased region" description="Basic residues" evidence="3">
    <location>
        <begin position="809"/>
        <end position="824"/>
    </location>
</feature>
<feature type="compositionally biased region" description="Basic and acidic residues" evidence="3">
    <location>
        <begin position="873"/>
        <end position="884"/>
    </location>
</feature>
<feature type="compositionally biased region" description="Basic and acidic residues" evidence="3">
    <location>
        <begin position="992"/>
        <end position="1002"/>
    </location>
</feature>
<feature type="compositionally biased region" description="Basic and acidic residues" evidence="3">
    <location>
        <begin position="1009"/>
        <end position="1041"/>
    </location>
</feature>
<feature type="compositionally biased region" description="Basic and acidic residues" evidence="3">
    <location>
        <begin position="1089"/>
        <end position="1098"/>
    </location>
</feature>
<feature type="compositionally biased region" description="Basic and acidic residues" evidence="3">
    <location>
        <begin position="1112"/>
        <end position="1130"/>
    </location>
</feature>
<feature type="compositionally biased region" description="Basic and acidic residues" evidence="3">
    <location>
        <begin position="1150"/>
        <end position="1170"/>
    </location>
</feature>
<feature type="compositionally biased region" description="Polar residues" evidence="3">
    <location>
        <begin position="1180"/>
        <end position="1200"/>
    </location>
</feature>
<feature type="compositionally biased region" description="Polar residues" evidence="3">
    <location>
        <begin position="1251"/>
        <end position="1265"/>
    </location>
</feature>
<feature type="compositionally biased region" description="Polar residues" evidence="3">
    <location>
        <begin position="1318"/>
        <end position="1330"/>
    </location>
</feature>
<feature type="compositionally biased region" description="Polar residues" evidence="3">
    <location>
        <begin position="1364"/>
        <end position="1382"/>
    </location>
</feature>
<feature type="compositionally biased region" description="Basic and acidic residues" evidence="3">
    <location>
        <begin position="1429"/>
        <end position="1448"/>
    </location>
</feature>
<feature type="compositionally biased region" description="Basic and acidic residues" evidence="3">
    <location>
        <begin position="1536"/>
        <end position="1561"/>
    </location>
</feature>
<feature type="compositionally biased region" description="Basic and acidic residues" evidence="3">
    <location>
        <begin position="1592"/>
        <end position="1603"/>
    </location>
</feature>
<feature type="compositionally biased region" description="Polar residues" evidence="3">
    <location>
        <begin position="1621"/>
        <end position="1642"/>
    </location>
</feature>
<feature type="compositionally biased region" description="Polar residues" evidence="3">
    <location>
        <begin position="1650"/>
        <end position="1665"/>
    </location>
</feature>
<feature type="compositionally biased region" description="Basic residues" evidence="3">
    <location>
        <begin position="1688"/>
        <end position="1697"/>
    </location>
</feature>
<feature type="compositionally biased region" description="Basic and acidic residues" evidence="3">
    <location>
        <begin position="1902"/>
        <end position="1913"/>
    </location>
</feature>
<feature type="compositionally biased region" description="Basic and acidic residues" evidence="3">
    <location>
        <begin position="1977"/>
        <end position="1996"/>
    </location>
</feature>
<feature type="compositionally biased region" description="Basic and acidic residues" evidence="3">
    <location>
        <begin position="2068"/>
        <end position="2078"/>
    </location>
</feature>
<feature type="compositionally biased region" description="Low complexity" evidence="3">
    <location>
        <begin position="2185"/>
        <end position="2199"/>
    </location>
</feature>
<feature type="compositionally biased region" description="Polar residues" evidence="3">
    <location>
        <begin position="2262"/>
        <end position="2273"/>
    </location>
</feature>
<feature type="compositionally biased region" description="Polar residues" evidence="3">
    <location>
        <begin position="2319"/>
        <end position="2334"/>
    </location>
</feature>
<feature type="compositionally biased region" description="Polar residues" evidence="3">
    <location>
        <begin position="2414"/>
        <end position="2429"/>
    </location>
</feature>
<feature type="splice variant" id="VSP_033583" description="In isoform 2." evidence="5">
    <original>SSDQPLLKEECKNGPKGAPEEEVTPVSEFVFSDIFIEVDETL</original>
    <variation>CEHCCVLLCMRYIYHLNEGRKSKFIFSWMSEIILVQLLFPTKMHLI</variation>
    <location>
        <begin position="2426"/>
        <end position="2467"/>
    </location>
</feature>
<feature type="sequence conflict" description="In Ref. 2; BAD90187." evidence="6" ref="2">
    <original>C</original>
    <variation>F</variation>
    <location>
        <position position="788"/>
    </location>
</feature>
<protein>
    <recommendedName>
        <fullName>Transcription factor TFIIIB component B'' homolog</fullName>
    </recommendedName>
    <alternativeName>
        <fullName>Transcription factor IIIB 150</fullName>
        <shortName>TFIIIB150</shortName>
    </alternativeName>
    <alternativeName>
        <fullName>Transcription factor-like nuclear regulator</fullName>
    </alternativeName>
</protein>
<gene>
    <name type="primary">Bdp1</name>
    <name type="synonym">Kiaa1241</name>
    <name type="synonym">Tfnr</name>
</gene>
<organism>
    <name type="scientific">Mus musculus</name>
    <name type="common">Mouse</name>
    <dbReference type="NCBI Taxonomy" id="10090"/>
    <lineage>
        <taxon>Eukaryota</taxon>
        <taxon>Metazoa</taxon>
        <taxon>Chordata</taxon>
        <taxon>Craniata</taxon>
        <taxon>Vertebrata</taxon>
        <taxon>Euteleostomi</taxon>
        <taxon>Mammalia</taxon>
        <taxon>Eutheria</taxon>
        <taxon>Euarchontoglires</taxon>
        <taxon>Glires</taxon>
        <taxon>Rodentia</taxon>
        <taxon>Myomorpha</taxon>
        <taxon>Muroidea</taxon>
        <taxon>Muridae</taxon>
        <taxon>Murinae</taxon>
        <taxon>Mus</taxon>
        <taxon>Mus</taxon>
    </lineage>
</organism>
<dbReference type="EMBL" id="CT025569">
    <property type="status" value="NOT_ANNOTATED_CDS"/>
    <property type="molecule type" value="Genomic_DNA"/>
</dbReference>
<dbReference type="EMBL" id="CT030167">
    <property type="status" value="NOT_ANNOTATED_CDS"/>
    <property type="molecule type" value="Genomic_DNA"/>
</dbReference>
<dbReference type="EMBL" id="AK220262">
    <property type="protein sequence ID" value="BAD90187.1"/>
    <property type="molecule type" value="mRNA"/>
</dbReference>
<dbReference type="EMBL" id="BC030359">
    <property type="protein sequence ID" value="AAH30359.1"/>
    <property type="status" value="ALT_SEQ"/>
    <property type="molecule type" value="mRNA"/>
</dbReference>
<dbReference type="EMBL" id="AK090184">
    <property type="protein sequence ID" value="BAC41127.1"/>
    <property type="molecule type" value="mRNA"/>
</dbReference>
<dbReference type="CCDS" id="CCDS49343.1">
    <molecule id="Q571C7-1"/>
</dbReference>
<dbReference type="RefSeq" id="NP_001074530.1">
    <molecule id="Q571C7-1"/>
    <property type="nucleotide sequence ID" value="NM_001081061.1"/>
</dbReference>
<dbReference type="RefSeq" id="XP_006517788.1">
    <property type="nucleotide sequence ID" value="XM_006517725.3"/>
</dbReference>
<dbReference type="SMR" id="Q571C7"/>
<dbReference type="BioGRID" id="243826">
    <property type="interactions" value="4"/>
</dbReference>
<dbReference type="FunCoup" id="Q571C7">
    <property type="interactions" value="2964"/>
</dbReference>
<dbReference type="STRING" id="10090.ENSMUSP00000038321"/>
<dbReference type="GlyGen" id="Q571C7">
    <property type="glycosylation" value="2 sites"/>
</dbReference>
<dbReference type="iPTMnet" id="Q571C7"/>
<dbReference type="PhosphoSitePlus" id="Q571C7"/>
<dbReference type="jPOST" id="Q571C7"/>
<dbReference type="PaxDb" id="10090-ENSMUSP00000038321"/>
<dbReference type="PeptideAtlas" id="Q571C7"/>
<dbReference type="ProteomicsDB" id="273552">
    <molecule id="Q571C7-1"/>
</dbReference>
<dbReference type="ProteomicsDB" id="273553">
    <molecule id="Q571C7-2"/>
</dbReference>
<dbReference type="Antibodypedia" id="24108">
    <property type="antibodies" value="21 antibodies from 7 providers"/>
</dbReference>
<dbReference type="Ensembl" id="ENSMUST00000038104.12">
    <molecule id="Q571C7-1"/>
    <property type="protein sequence ID" value="ENSMUSP00000038321.6"/>
    <property type="gene ID" value="ENSMUSG00000049658.14"/>
</dbReference>
<dbReference type="Ensembl" id="ENSMUST00000109379.9">
    <molecule id="Q571C7-2"/>
    <property type="protein sequence ID" value="ENSMUSP00000105005.3"/>
    <property type="gene ID" value="ENSMUSG00000049658.14"/>
</dbReference>
<dbReference type="GeneID" id="544971"/>
<dbReference type="KEGG" id="mmu:544971"/>
<dbReference type="UCSC" id="uc007rqc.1">
    <molecule id="Q571C7-1"/>
    <property type="organism name" value="mouse"/>
</dbReference>
<dbReference type="AGR" id="MGI:1347077"/>
<dbReference type="CTD" id="55814"/>
<dbReference type="MGI" id="MGI:1347077">
    <property type="gene designation" value="Bdp1"/>
</dbReference>
<dbReference type="VEuPathDB" id="HostDB:ENSMUSG00000049658"/>
<dbReference type="eggNOG" id="KOG2009">
    <property type="taxonomic scope" value="Eukaryota"/>
</dbReference>
<dbReference type="GeneTree" id="ENSGT00390000012762"/>
<dbReference type="HOGENOM" id="CLU_000736_0_0_1"/>
<dbReference type="InParanoid" id="Q571C7"/>
<dbReference type="OMA" id="KNDISPR"/>
<dbReference type="OrthoDB" id="272624at2759"/>
<dbReference type="PhylomeDB" id="Q571C7"/>
<dbReference type="TreeFam" id="TF328878"/>
<dbReference type="Reactome" id="R-MMU-76061">
    <property type="pathway name" value="RNA Polymerase III Transcription Initiation From Type 1 Promoter"/>
</dbReference>
<dbReference type="Reactome" id="R-MMU-76066">
    <property type="pathway name" value="RNA Polymerase III Transcription Initiation From Type 2 Promoter"/>
</dbReference>
<dbReference type="Reactome" id="R-MMU-76071">
    <property type="pathway name" value="RNA Polymerase III Transcription Initiation From Type 3 Promoter"/>
</dbReference>
<dbReference type="BioGRID-ORCS" id="544971">
    <property type="hits" value="13 hits in 80 CRISPR screens"/>
</dbReference>
<dbReference type="ChiTaRS" id="Bdp1">
    <property type="organism name" value="mouse"/>
</dbReference>
<dbReference type="PRO" id="PR:Q571C7"/>
<dbReference type="Proteomes" id="UP000000589">
    <property type="component" value="Chromosome 13"/>
</dbReference>
<dbReference type="RNAct" id="Q571C7">
    <property type="molecule type" value="protein"/>
</dbReference>
<dbReference type="Bgee" id="ENSMUSG00000049658">
    <property type="expression patterns" value="Expressed in humerus cartilage element and 234 other cell types or tissues"/>
</dbReference>
<dbReference type="ExpressionAtlas" id="Q571C7">
    <property type="expression patterns" value="baseline and differential"/>
</dbReference>
<dbReference type="GO" id="GO:0005654">
    <property type="term" value="C:nucleoplasm"/>
    <property type="evidence" value="ECO:0007669"/>
    <property type="project" value="Ensembl"/>
</dbReference>
<dbReference type="GO" id="GO:0005634">
    <property type="term" value="C:nucleus"/>
    <property type="evidence" value="ECO:0000266"/>
    <property type="project" value="MGI"/>
</dbReference>
<dbReference type="GO" id="GO:0006355">
    <property type="term" value="P:regulation of DNA-templated transcription"/>
    <property type="evidence" value="ECO:0000247"/>
    <property type="project" value="MGI"/>
</dbReference>
<dbReference type="InterPro" id="IPR009057">
    <property type="entry name" value="Homeodomain-like_sf"/>
</dbReference>
<dbReference type="InterPro" id="IPR001005">
    <property type="entry name" value="SANT/Myb"/>
</dbReference>
<dbReference type="InterPro" id="IPR039467">
    <property type="entry name" value="TFIIIB_B''_Myb"/>
</dbReference>
<dbReference type="PANTHER" id="PTHR22929">
    <property type="entry name" value="RNA POLYMERASE III TRANSCRIPTION INITIATION FACTOR B"/>
    <property type="match status" value="1"/>
</dbReference>
<dbReference type="PANTHER" id="PTHR22929:SF0">
    <property type="entry name" value="TRANSCRIPTION FACTOR TFIIIB COMPONENT B'' HOMOLOG"/>
    <property type="match status" value="1"/>
</dbReference>
<dbReference type="Pfam" id="PF15963">
    <property type="entry name" value="Myb_DNA-bind_7"/>
    <property type="match status" value="1"/>
</dbReference>
<dbReference type="SMART" id="SM00717">
    <property type="entry name" value="SANT"/>
    <property type="match status" value="1"/>
</dbReference>
<dbReference type="SUPFAM" id="SSF46689">
    <property type="entry name" value="Homeodomain-like"/>
    <property type="match status" value="1"/>
</dbReference>
<comment type="function">
    <text evidence="1">General activator of RNA polymerase III transcription. Requires for transcription from all three types of polymerase III promoters. Requires for transcription of genes with internal promoter elements and with promoter elements upstream of the initiation site (By similarity).</text>
</comment>
<comment type="subunit">
    <text evidence="1">Component of TFIIIB complex. The TFIIIB complex has two activities, alpha and beta. The TFIIIB-alpha and TFIIIB-beta activities are required for transcription of genes with TFIIIC-bound internal promoters and PSE transcription factor-bound external promoters, respectively. The TFIIIB-alpha activity complex is composed of TBP, BDP1, and a complex containing both BRF2 and at least four stably associated proteins; YY1 facilitates the formation of TFIIIB-alpha activity complex. The TFIIIB-beta activity complex is composed of TBP, BDP1, and BRF1. Interacts with BRF1; this interaction diminishes during mitosis resulting in the release of BDP1 from chromosomal templates. Component of TFIIIC complex. The TFIIIC complex has two activities, C1 and C2. The TFIIIC2 activity complex is only required for transcription of the 'classical' pol III genes whereas the TFIIIC1 activity complex is required for transcription of all pol III genes. The TFIIIC1 activity complex is composed at least of BDP1. Interacts with ZBTB43 (By similarity).</text>
</comment>
<comment type="subcellular location">
    <subcellularLocation>
        <location evidence="1">Nucleus</location>
    </subcellularLocation>
</comment>
<comment type="alternative products">
    <event type="alternative splicing"/>
    <isoform>
        <id>Q571C7-1</id>
        <name>1</name>
        <sequence type="displayed"/>
    </isoform>
    <isoform>
        <id>Q571C7-2</id>
        <name>2</name>
        <sequence type="described" ref="VSP_033583"/>
    </isoform>
</comment>
<comment type="tissue specificity">
    <text evidence="4">Expressed in the cochlea, particularly in the spiral ligament, the capillaries of the stria vascularis and the basilar membrane.</text>
</comment>
<comment type="PTM">
    <text evidence="1">Phosphorylated by CSNK2A1 during mitosis, resulting in its release from chromatin and suppression of polymerase III transcription.</text>
</comment>
<comment type="sequence caution" evidence="6">
    <conflict type="miscellaneous discrepancy">
        <sequence resource="EMBL-CDS" id="AAH30359"/>
    </conflict>
    <text>Contaminating sequence. Sequence of unknown origin in the N-terminal part.</text>
</comment>
<keyword id="KW-0010">Activator</keyword>
<keyword id="KW-0025">Alternative splicing</keyword>
<keyword id="KW-0175">Coiled coil</keyword>
<keyword id="KW-0539">Nucleus</keyword>
<keyword id="KW-1185">Reference proteome</keyword>
<keyword id="KW-0804">Transcription</keyword>
<keyword id="KW-0805">Transcription regulation</keyword>
<proteinExistence type="evidence at transcript level"/>
<reference key="1">
    <citation type="journal article" date="2009" name="PLoS Biol.">
        <title>Lineage-specific biology revealed by a finished genome assembly of the mouse.</title>
        <authorList>
            <person name="Church D.M."/>
            <person name="Goodstadt L."/>
            <person name="Hillier L.W."/>
            <person name="Zody M.C."/>
            <person name="Goldstein S."/>
            <person name="She X."/>
            <person name="Bult C.J."/>
            <person name="Agarwala R."/>
            <person name="Cherry J.L."/>
            <person name="DiCuccio M."/>
            <person name="Hlavina W."/>
            <person name="Kapustin Y."/>
            <person name="Meric P."/>
            <person name="Maglott D."/>
            <person name="Birtle Z."/>
            <person name="Marques A.C."/>
            <person name="Graves T."/>
            <person name="Zhou S."/>
            <person name="Teague B."/>
            <person name="Potamousis K."/>
            <person name="Churas C."/>
            <person name="Place M."/>
            <person name="Herschleb J."/>
            <person name="Runnheim R."/>
            <person name="Forrest D."/>
            <person name="Amos-Landgraf J."/>
            <person name="Schwartz D.C."/>
            <person name="Cheng Z."/>
            <person name="Lindblad-Toh K."/>
            <person name="Eichler E.E."/>
            <person name="Ponting C.P."/>
        </authorList>
    </citation>
    <scope>NUCLEOTIDE SEQUENCE [LARGE SCALE GENOMIC DNA]</scope>
    <source>
        <strain>C57BL/6J</strain>
    </source>
</reference>
<reference key="2">
    <citation type="submission" date="2005-02" db="EMBL/GenBank/DDBJ databases">
        <title>Prediction of the coding sequences of mouse homologues of KIAA gene. The complete nucleotide sequences of mouse KIAA-homologous cDNAs identified by screening of terminal sequences of cDNA clones randomly sampled from size-fractionated libraries.</title>
        <authorList>
            <person name="Okazaki N."/>
            <person name="Kikuno R.F."/>
            <person name="Ohara R."/>
            <person name="Inamoto S."/>
            <person name="Nagase T."/>
            <person name="Ohara O."/>
            <person name="Koga H."/>
        </authorList>
    </citation>
    <scope>NUCLEOTIDE SEQUENCE [LARGE SCALE MRNA] OF 508-2467 (ISOFORM 1)</scope>
    <source>
        <tissue>Pancreatic islet</tissue>
    </source>
</reference>
<reference key="3">
    <citation type="journal article" date="2004" name="Genome Res.">
        <title>The status, quality, and expansion of the NIH full-length cDNA project: the Mammalian Gene Collection (MGC).</title>
        <authorList>
            <consortium name="The MGC Project Team"/>
        </authorList>
    </citation>
    <scope>NUCLEOTIDE SEQUENCE [LARGE SCALE MRNA] OF 1852-2467 (ISOFORM 1)</scope>
    <source>
        <tissue>Eye</tissue>
    </source>
</reference>
<reference key="4">
    <citation type="journal article" date="2005" name="Science">
        <title>The transcriptional landscape of the mammalian genome.</title>
        <authorList>
            <person name="Carninci P."/>
            <person name="Kasukawa T."/>
            <person name="Katayama S."/>
            <person name="Gough J."/>
            <person name="Frith M.C."/>
            <person name="Maeda N."/>
            <person name="Oyama R."/>
            <person name="Ravasi T."/>
            <person name="Lenhard B."/>
            <person name="Wells C."/>
            <person name="Kodzius R."/>
            <person name="Shimokawa K."/>
            <person name="Bajic V.B."/>
            <person name="Brenner S.E."/>
            <person name="Batalov S."/>
            <person name="Forrest A.R."/>
            <person name="Zavolan M."/>
            <person name="Davis M.J."/>
            <person name="Wilming L.G."/>
            <person name="Aidinis V."/>
            <person name="Allen J.E."/>
            <person name="Ambesi-Impiombato A."/>
            <person name="Apweiler R."/>
            <person name="Aturaliya R.N."/>
            <person name="Bailey T.L."/>
            <person name="Bansal M."/>
            <person name="Baxter L."/>
            <person name="Beisel K.W."/>
            <person name="Bersano T."/>
            <person name="Bono H."/>
            <person name="Chalk A.M."/>
            <person name="Chiu K.P."/>
            <person name="Choudhary V."/>
            <person name="Christoffels A."/>
            <person name="Clutterbuck D.R."/>
            <person name="Crowe M.L."/>
            <person name="Dalla E."/>
            <person name="Dalrymple B.P."/>
            <person name="de Bono B."/>
            <person name="Della Gatta G."/>
            <person name="di Bernardo D."/>
            <person name="Down T."/>
            <person name="Engstrom P."/>
            <person name="Fagiolini M."/>
            <person name="Faulkner G."/>
            <person name="Fletcher C.F."/>
            <person name="Fukushima T."/>
            <person name="Furuno M."/>
            <person name="Futaki S."/>
            <person name="Gariboldi M."/>
            <person name="Georgii-Hemming P."/>
            <person name="Gingeras T.R."/>
            <person name="Gojobori T."/>
            <person name="Green R.E."/>
            <person name="Gustincich S."/>
            <person name="Harbers M."/>
            <person name="Hayashi Y."/>
            <person name="Hensch T.K."/>
            <person name="Hirokawa N."/>
            <person name="Hill D."/>
            <person name="Huminiecki L."/>
            <person name="Iacono M."/>
            <person name="Ikeo K."/>
            <person name="Iwama A."/>
            <person name="Ishikawa T."/>
            <person name="Jakt M."/>
            <person name="Kanapin A."/>
            <person name="Katoh M."/>
            <person name="Kawasawa Y."/>
            <person name="Kelso J."/>
            <person name="Kitamura H."/>
            <person name="Kitano H."/>
            <person name="Kollias G."/>
            <person name="Krishnan S.P."/>
            <person name="Kruger A."/>
            <person name="Kummerfeld S.K."/>
            <person name="Kurochkin I.V."/>
            <person name="Lareau L.F."/>
            <person name="Lazarevic D."/>
            <person name="Lipovich L."/>
            <person name="Liu J."/>
            <person name="Liuni S."/>
            <person name="McWilliam S."/>
            <person name="Madan Babu M."/>
            <person name="Madera M."/>
            <person name="Marchionni L."/>
            <person name="Matsuda H."/>
            <person name="Matsuzawa S."/>
            <person name="Miki H."/>
            <person name="Mignone F."/>
            <person name="Miyake S."/>
            <person name="Morris K."/>
            <person name="Mottagui-Tabar S."/>
            <person name="Mulder N."/>
            <person name="Nakano N."/>
            <person name="Nakauchi H."/>
            <person name="Ng P."/>
            <person name="Nilsson R."/>
            <person name="Nishiguchi S."/>
            <person name="Nishikawa S."/>
            <person name="Nori F."/>
            <person name="Ohara O."/>
            <person name="Okazaki Y."/>
            <person name="Orlando V."/>
            <person name="Pang K.C."/>
            <person name="Pavan W.J."/>
            <person name="Pavesi G."/>
            <person name="Pesole G."/>
            <person name="Petrovsky N."/>
            <person name="Piazza S."/>
            <person name="Reed J."/>
            <person name="Reid J.F."/>
            <person name="Ring B.Z."/>
            <person name="Ringwald M."/>
            <person name="Rost B."/>
            <person name="Ruan Y."/>
            <person name="Salzberg S.L."/>
            <person name="Sandelin A."/>
            <person name="Schneider C."/>
            <person name="Schoenbach C."/>
            <person name="Sekiguchi K."/>
            <person name="Semple C.A."/>
            <person name="Seno S."/>
            <person name="Sessa L."/>
            <person name="Sheng Y."/>
            <person name="Shibata Y."/>
            <person name="Shimada H."/>
            <person name="Shimada K."/>
            <person name="Silva D."/>
            <person name="Sinclair B."/>
            <person name="Sperling S."/>
            <person name="Stupka E."/>
            <person name="Sugiura K."/>
            <person name="Sultana R."/>
            <person name="Takenaka Y."/>
            <person name="Taki K."/>
            <person name="Tammoja K."/>
            <person name="Tan S.L."/>
            <person name="Tang S."/>
            <person name="Taylor M.S."/>
            <person name="Tegner J."/>
            <person name="Teichmann S.A."/>
            <person name="Ueda H.R."/>
            <person name="van Nimwegen E."/>
            <person name="Verardo R."/>
            <person name="Wei C.L."/>
            <person name="Yagi K."/>
            <person name="Yamanishi H."/>
            <person name="Zabarovsky E."/>
            <person name="Zhu S."/>
            <person name="Zimmer A."/>
            <person name="Hide W."/>
            <person name="Bult C."/>
            <person name="Grimmond S.M."/>
            <person name="Teasdale R.D."/>
            <person name="Liu E.T."/>
            <person name="Brusic V."/>
            <person name="Quackenbush J."/>
            <person name="Wahlestedt C."/>
            <person name="Mattick J.S."/>
            <person name="Hume D.A."/>
            <person name="Kai C."/>
            <person name="Sasaki D."/>
            <person name="Tomaru Y."/>
            <person name="Fukuda S."/>
            <person name="Kanamori-Katayama M."/>
            <person name="Suzuki M."/>
            <person name="Aoki J."/>
            <person name="Arakawa T."/>
            <person name="Iida J."/>
            <person name="Imamura K."/>
            <person name="Itoh M."/>
            <person name="Kato T."/>
            <person name="Kawaji H."/>
            <person name="Kawagashira N."/>
            <person name="Kawashima T."/>
            <person name="Kojima M."/>
            <person name="Kondo S."/>
            <person name="Konno H."/>
            <person name="Nakano K."/>
            <person name="Ninomiya N."/>
            <person name="Nishio T."/>
            <person name="Okada M."/>
            <person name="Plessy C."/>
            <person name="Shibata K."/>
            <person name="Shiraki T."/>
            <person name="Suzuki S."/>
            <person name="Tagami M."/>
            <person name="Waki K."/>
            <person name="Watahiki A."/>
            <person name="Okamura-Oho Y."/>
            <person name="Suzuki H."/>
            <person name="Kawai J."/>
            <person name="Hayashizaki Y."/>
        </authorList>
    </citation>
    <scope>NUCLEOTIDE SEQUENCE [LARGE SCALE MRNA] OF 2047-2467 (ISOFORM 2)</scope>
    <source>
        <strain>C57BL/6J</strain>
        <tissue>Spinal cord</tissue>
    </source>
</reference>
<reference key="5">
    <citation type="journal article" date="2013" name="PLoS ONE">
        <title>Linkage study and exome sequencing identify a BDP1 mutation associated with hereditary hearing loss.</title>
        <authorList>
            <person name="Girotto G."/>
            <person name="Abdulhadi K."/>
            <person name="Buniello A."/>
            <person name="Vozzi D."/>
            <person name="Licastro D."/>
            <person name="d'Eustacchio A."/>
            <person name="Vuckovic D."/>
            <person name="Alkowari M.K."/>
            <person name="Steel K.P."/>
            <person name="Badii R."/>
            <person name="Gasparini P."/>
        </authorList>
    </citation>
    <scope>TISSUE SPECIFICITY</scope>
</reference>
<sequence>MFRRARLSVKPNVRPGVGTRGSAAPNPQRGPEAPRPPEPATESAPKPAEPTDVPAVDSGGAEPQEQAPGSSDEKTGDKNNAAESSTLSSASSQRRKRVSSTSSLVQPSGSAPSQSRPLSTVDHDAPQPNPTPAKEKQPCSDRYRIYKARKLREMLKEELRKEKKQWKNKFSTNESQRPPDRSKMTMRDFIYYLPDNNPMTSSVEQEKKPEKSLAPTPTRDRQENQSTQDANDNEDVEEEVDDGPLLVPRVKVAEDGSIILDEESLTVEVLRTKGPCVVEENDPIFERGSTTTYSSFRKNYYSKPWSNKETDMFFLAISMVGTDFSMIGQLFPHRARIEIKNKFKREEKTNGWRIDKAFQEKRPFDFDFFAHLLQKVLAEEEKRKQKSTKCQSLKEKASKPRKNLKAKTVTSEEVNDDPDESVNSNISDPERSQNDAETVNEEESPSSSGQHLEQAMLEQDQNQEKKRRRNQGEANKQEATNLLERVLVHSSPPAAEIHKNTCPSEENESECNKEQIPSLTQNIDDIAGLAPSEETEMRMDPIPSTCNQQDIMPLARESSESCAVALPVWEPGNTASADMAHAESSCSEGRGADLKTAAPETEQTENVKPKSRSRLQRPKPNLARAVGKKSAVSQDRQDERNKNSPSETAAEKNHMEKETMNESETSVAKNTDGESPGAKTVSDLSEKSCVQQDSQAKVLRPTRLMRSRMQRPKPNVVKAAERKEILTSQEKFGAHVEKSEDESCVVIPPQTENESHKNLQCEDTVSEPGRKDPFENIQPDQPQVLSDCPSIHEGNKENKRKQVPVLRTRFQKPKPNTGRRRRRISSKEGIPEETPISGEIPATWEEIPSLDTSLREEVLSVPLAPLTATASTKDSESDVKDSGRNDTASNAEMSEMTDVTMEMETGLETIGRDTCPGEMGAEMIDIPMETEAGLKASLNETSCMEKVPELIDTTGEICTNLGETGRKEVFLQENGPKEVGPVSEPETGLQETGKDLAMKESTPDTTDSTEEREAYSEETERQEKISALIKDAEEAKARGEMETPLEEIGGGTSQRGKAAGAPVEQSASEEEPQGSACREEVAVESSTAEGKELNLRETGEDDVSSMVVVLGEKTDIEETNGDPKETERESSVSWERGSGEIQVGEEMVEDLGKPEKIDVAPREREPEEHSSGQPEADVILSSSDGSTGSPQDKVNISSKISVMPTLVEEKETTDKDISSHLGHVESCSQNLGRHETDQGMPLPDALERFSDTNLSKPLPQEQQPLQVKPAPFLRSRFKKPKPNLSRAALKRATIEAEHCVPGKKSEACKVEAAMLQQDSDQAALSPQHNVPSLMASRENDKSGHEEEEEAAILPCTQTEKDASPPNSSEPKEGSQLTPNQENGLLVPIGTPMMNTVTQETRQNVVQTTLPVRGRLQRPRPNVQKARQRQIVEKGEARDIAKNEGPELQKDETRTCLTVANSSHIESGVAVDMSSRVSECQVSESQGHADPVENLSVNKASVVHEQMRHENKPYVPSPALLIRRRFQKAKPNLGGARRKDEQPGVEKGRTDESTALTAEDHLLQKEDCDTQLSLQAREKADMPLEVSVRKECIHSEESGSDRNDAQPNAGPSEGSRDETAKEQPTSLGLEEQSLSKQIRSSCPQLWKESSYPKTVSSRRTPLSSASECEIEHSWKRTQRKTKPNLTKGRGSKRIRGKTAKKEPRASKSVLVTLRASQKEDEDDAEDFDSDYEEETYHLAPEELSKAPVFVPVGLRSPEPVSAQIEETMEELEITMDVADMTVVEHQLSHMDTTAQAVQAEKAVYPPSFEMDVGEQTQEEPGPSDGSTEAAITLLTMGDIVLQSEIIPGQGDVGVCVFPDVHSEDKSHAPFSPDNVNQKVVHDYPEVCSPVISTSHASFEENRIVSKEQSNRDAAVEEEAVEETLPTRNTTSTMSTHLRMESMVVTPELNSEKTLEISESHGHQEVASFCITKETEVEIQRETEGDDSKAVELEDKSHAPVTAAETKEEEQSQCVGDVEGASVSQEAILPARIEDHEETLQEVQESGTAVASSEIGQQTLDSGQSFGESAAKEALKETPKGSDVPVLHGPESVPSHIPEAQQENTGPQAVTVNPFADGQQDGEDEQAFILTLVEIPTHATEGFTDAAMQLMPSSLLPAPILVRSGNAAERGDLSGSLQTSLVVQDAPSLSPSRSGSSEKPPANLDLTSRKRFCCSPDESIHVPPAKKSSLVPGIDYQECTSEVCSEELNVFEKTAESCMGQGIFPTSESTHATSKPQKEHSEPTDTGSSGSLDEIKDACVENMAQLPQSEIVSDKEEKTEPASNSEQRDIVTSSSKPPLTRPGRRPLGFLSLLCPKNSLESDEVTQTHSKKRLKPQIPVSRRNLRKPNLHNTSQKKNQDSSAPPPSPSVTAPLSGTAGSPESSAAQVSSDQPLLKEECKNGPKGAPEEEVTPVSEFVFSDIFIEVDETL</sequence>
<accession>Q571C7</accession>
<accession>Q8BTI4</accession>
<accession>Q8K0U7</accession>
<evidence type="ECO:0000250" key="1"/>
<evidence type="ECO:0000255" key="2"/>
<evidence type="ECO:0000256" key="3">
    <source>
        <dbReference type="SAM" id="MobiDB-lite"/>
    </source>
</evidence>
<evidence type="ECO:0000269" key="4">
    <source>
    </source>
</evidence>
<evidence type="ECO:0000303" key="5">
    <source>
    </source>
</evidence>
<evidence type="ECO:0000305" key="6"/>
<name>BDP1_MOUSE</name>